<gene>
    <name type="primary">ATX3</name>
    <name type="synonym">SDG14</name>
    <name type="synonym">SET14</name>
    <name type="ordered locus">At3g61740</name>
    <name type="ORF">F15G16.130</name>
</gene>
<sequence length="1018" mass="115689">MILKRTLTTFENQNLKRCKIDSEIEYGRKKGEIIVYKKRQRATVDQPCSKEPELLTSSSSSLTSKEESQQVCSDQSKSSRGRVRAVPSRFKDSIVGTWKSSRRKGESTESSHDDDDVSLGKKVKGFSGSSKLHRSKDSKVFPRKDNGDSSEVDCDYWDVQISYDDANFGMPKKSDASRKGVYKPEEFTVGDLVWAKCGKRFPAWPAVVIDPISQAPDGVLKHCVPGAICVMFFGYSKDGTQRDYAWVRQGMVYPFTEFMDKFQDQTNLFNYKASEFNKALEEAVLAENGNFGDAEIISPDSSATESDQDYGPASRFQGSYHEDIRTCDGCGSVMPLKSLKRTKDSQPEELLCKHCSKLRKSNQYCGICKRIWHPSDDGDWVCCDGCDVWVHAECDNITNERFKELEHNNYYCPDCKVQHELTPTILEEQNSVFKSTEKTTETGLPDAITVVCNGMEGTYIRKFHAIECKCGSCGSRKQSPSEWERHTGCRAKKWKYSVRVKDTMLPLEKWIAEFSTYTLETQMLDKQKMLSLLEEKYEPVRAKWTTERCAVCRWVEDWEENKMIICNRCQVAVHQECYGVSKSQDLTSWVCRACETPDIERDCCLCPVKGGALKPSDVEGLWVHVTCAWFRPEVGFLNHENMEPAVGLFKIPANSFLKVCTICKQTHGSCVHCCKCATHFHAMCASRAGYNMELHCLEKNGVQRTRKSVYCSFHRKPDPDSVVVVHTPSGVFGSRNLLQNQYGRAKGSRLVLTKKMKLPGFQTQTQAEQSRVFDSLSAARCRIYSRSNTKIDLEAISHRLKGPSHHSLSAIENLNSFKASFSFRAPFMSVFCFLGATFSEYLRKILISIYLVTHQEADFTSFRERLKHLQRTENFRVCFGKSGIHGWGLFARKSIQEGEMIIEYRGVKVRRSVADLREANYRSQGKDCYLFKISEEIVIDATDSGNIARLINHSCMPNCYARIVSMGDGEDNRIVLIAKTNVAAGEELTYDYLFEVDESEEIKVPCLCKAPNCRKFMN</sequence>
<evidence type="ECO:0000250" key="1"/>
<evidence type="ECO:0000255" key="2">
    <source>
        <dbReference type="PROSITE-ProRule" id="PRU00155"/>
    </source>
</evidence>
<evidence type="ECO:0000255" key="3">
    <source>
        <dbReference type="PROSITE-ProRule" id="PRU00162"/>
    </source>
</evidence>
<evidence type="ECO:0000255" key="4">
    <source>
        <dbReference type="PROSITE-ProRule" id="PRU00190"/>
    </source>
</evidence>
<evidence type="ECO:0000255" key="5">
    <source>
        <dbReference type="PROSITE-ProRule" id="PRU01146"/>
    </source>
</evidence>
<evidence type="ECO:0000256" key="6">
    <source>
        <dbReference type="SAM" id="MobiDB-lite"/>
    </source>
</evidence>
<evidence type="ECO:0000305" key="7"/>
<comment type="function">
    <text evidence="1">Histone methyltransferase.</text>
</comment>
<comment type="catalytic activity">
    <reaction>
        <text>L-lysyl-[histone] + S-adenosyl-L-methionine = N(6)-methyl-L-lysyl-[histone] + S-adenosyl-L-homocysteine + H(+)</text>
        <dbReference type="Rhea" id="RHEA:10024"/>
        <dbReference type="Rhea" id="RHEA-COMP:9845"/>
        <dbReference type="Rhea" id="RHEA-COMP:9846"/>
        <dbReference type="ChEBI" id="CHEBI:15378"/>
        <dbReference type="ChEBI" id="CHEBI:29969"/>
        <dbReference type="ChEBI" id="CHEBI:57856"/>
        <dbReference type="ChEBI" id="CHEBI:59789"/>
        <dbReference type="ChEBI" id="CHEBI:61929"/>
    </reaction>
</comment>
<comment type="subcellular location">
    <subcellularLocation>
        <location evidence="1">Nucleus</location>
    </subcellularLocation>
</comment>
<comment type="alternative products">
    <event type="alternative splicing"/>
    <isoform>
        <id>Q9M364-1</id>
        <name>1</name>
        <sequence type="displayed"/>
    </isoform>
    <text>A number of isoforms are produced. According to EST sequences.</text>
</comment>
<comment type="similarity">
    <text evidence="4">Belongs to the class V-like SAM-binding methyltransferase superfamily. Histone-lysine methyltransferase family. TRX/MLL subfamily.</text>
</comment>
<comment type="sequence caution" evidence="7">
    <conflict type="erroneous gene model prediction">
        <sequence resource="EMBL-CDS" id="CAB71104"/>
    </conflict>
</comment>
<protein>
    <recommendedName>
        <fullName>Histone-lysine N-methyltransferase ATX3</fullName>
        <ecNumber>2.1.1.-</ecNumber>
    </recommendedName>
    <alternativeName>
        <fullName>Protein SET DOMAIN GROUP 14</fullName>
    </alternativeName>
    <alternativeName>
        <fullName>Trithorax-homolog protein 3</fullName>
        <shortName>TRX-homolog protein 3</shortName>
    </alternativeName>
</protein>
<keyword id="KW-0025">Alternative splicing</keyword>
<keyword id="KW-0156">Chromatin regulator</keyword>
<keyword id="KW-0479">Metal-binding</keyword>
<keyword id="KW-0489">Methyltransferase</keyword>
<keyword id="KW-0539">Nucleus</keyword>
<keyword id="KW-1185">Reference proteome</keyword>
<keyword id="KW-0677">Repeat</keyword>
<keyword id="KW-0949">S-adenosyl-L-methionine</keyword>
<keyword id="KW-0808">Transferase</keyword>
<keyword id="KW-0862">Zinc</keyword>
<keyword id="KW-0863">Zinc-finger</keyword>
<organism>
    <name type="scientific">Arabidopsis thaliana</name>
    <name type="common">Mouse-ear cress</name>
    <dbReference type="NCBI Taxonomy" id="3702"/>
    <lineage>
        <taxon>Eukaryota</taxon>
        <taxon>Viridiplantae</taxon>
        <taxon>Streptophyta</taxon>
        <taxon>Embryophyta</taxon>
        <taxon>Tracheophyta</taxon>
        <taxon>Spermatophyta</taxon>
        <taxon>Magnoliopsida</taxon>
        <taxon>eudicotyledons</taxon>
        <taxon>Gunneridae</taxon>
        <taxon>Pentapetalae</taxon>
        <taxon>rosids</taxon>
        <taxon>malvids</taxon>
        <taxon>Brassicales</taxon>
        <taxon>Brassicaceae</taxon>
        <taxon>Camelineae</taxon>
        <taxon>Arabidopsis</taxon>
    </lineage>
</organism>
<proteinExistence type="evidence at transcript level"/>
<reference key="1">
    <citation type="journal article" date="2000" name="Nature">
        <title>Sequence and analysis of chromosome 3 of the plant Arabidopsis thaliana.</title>
        <authorList>
            <person name="Salanoubat M."/>
            <person name="Lemcke K."/>
            <person name="Rieger M."/>
            <person name="Ansorge W."/>
            <person name="Unseld M."/>
            <person name="Fartmann B."/>
            <person name="Valle G."/>
            <person name="Bloecker H."/>
            <person name="Perez-Alonso M."/>
            <person name="Obermaier B."/>
            <person name="Delseny M."/>
            <person name="Boutry M."/>
            <person name="Grivell L.A."/>
            <person name="Mache R."/>
            <person name="Puigdomenech P."/>
            <person name="De Simone V."/>
            <person name="Choisne N."/>
            <person name="Artiguenave F."/>
            <person name="Robert C."/>
            <person name="Brottier P."/>
            <person name="Wincker P."/>
            <person name="Cattolico L."/>
            <person name="Weissenbach J."/>
            <person name="Saurin W."/>
            <person name="Quetier F."/>
            <person name="Schaefer M."/>
            <person name="Mueller-Auer S."/>
            <person name="Gabel C."/>
            <person name="Fuchs M."/>
            <person name="Benes V."/>
            <person name="Wurmbach E."/>
            <person name="Drzonek H."/>
            <person name="Erfle H."/>
            <person name="Jordan N."/>
            <person name="Bangert S."/>
            <person name="Wiedelmann R."/>
            <person name="Kranz H."/>
            <person name="Voss H."/>
            <person name="Holland R."/>
            <person name="Brandt P."/>
            <person name="Nyakatura G."/>
            <person name="Vezzi A."/>
            <person name="D'Angelo M."/>
            <person name="Pallavicini A."/>
            <person name="Toppo S."/>
            <person name="Simionati B."/>
            <person name="Conrad A."/>
            <person name="Hornischer K."/>
            <person name="Kauer G."/>
            <person name="Loehnert T.-H."/>
            <person name="Nordsiek G."/>
            <person name="Reichelt J."/>
            <person name="Scharfe M."/>
            <person name="Schoen O."/>
            <person name="Bargues M."/>
            <person name="Terol J."/>
            <person name="Climent J."/>
            <person name="Navarro P."/>
            <person name="Collado C."/>
            <person name="Perez-Perez A."/>
            <person name="Ottenwaelder B."/>
            <person name="Duchemin D."/>
            <person name="Cooke R."/>
            <person name="Laudie M."/>
            <person name="Berger-Llauro C."/>
            <person name="Purnelle B."/>
            <person name="Masuy D."/>
            <person name="de Haan M."/>
            <person name="Maarse A.C."/>
            <person name="Alcaraz J.-P."/>
            <person name="Cottet A."/>
            <person name="Casacuberta E."/>
            <person name="Monfort A."/>
            <person name="Argiriou A."/>
            <person name="Flores M."/>
            <person name="Liguori R."/>
            <person name="Vitale D."/>
            <person name="Mannhaupt G."/>
            <person name="Haase D."/>
            <person name="Schoof H."/>
            <person name="Rudd S."/>
            <person name="Zaccaria P."/>
            <person name="Mewes H.-W."/>
            <person name="Mayer K.F.X."/>
            <person name="Kaul S."/>
            <person name="Town C.D."/>
            <person name="Koo H.L."/>
            <person name="Tallon L.J."/>
            <person name="Jenkins J."/>
            <person name="Rooney T."/>
            <person name="Rizzo M."/>
            <person name="Walts A."/>
            <person name="Utterback T."/>
            <person name="Fujii C.Y."/>
            <person name="Shea T.P."/>
            <person name="Creasy T.H."/>
            <person name="Haas B."/>
            <person name="Maiti R."/>
            <person name="Wu D."/>
            <person name="Peterson J."/>
            <person name="Van Aken S."/>
            <person name="Pai G."/>
            <person name="Militscher J."/>
            <person name="Sellers P."/>
            <person name="Gill J.E."/>
            <person name="Feldblyum T.V."/>
            <person name="Preuss D."/>
            <person name="Lin X."/>
            <person name="Nierman W.C."/>
            <person name="Salzberg S.L."/>
            <person name="White O."/>
            <person name="Venter J.C."/>
            <person name="Fraser C.M."/>
            <person name="Kaneko T."/>
            <person name="Nakamura Y."/>
            <person name="Sato S."/>
            <person name="Kato T."/>
            <person name="Asamizu E."/>
            <person name="Sasamoto S."/>
            <person name="Kimura T."/>
            <person name="Idesawa K."/>
            <person name="Kawashima K."/>
            <person name="Kishida Y."/>
            <person name="Kiyokawa C."/>
            <person name="Kohara M."/>
            <person name="Matsumoto M."/>
            <person name="Matsuno A."/>
            <person name="Muraki A."/>
            <person name="Nakayama S."/>
            <person name="Nakazaki N."/>
            <person name="Shinpo S."/>
            <person name="Takeuchi C."/>
            <person name="Wada T."/>
            <person name="Watanabe A."/>
            <person name="Yamada M."/>
            <person name="Yasuda M."/>
            <person name="Tabata S."/>
        </authorList>
    </citation>
    <scope>NUCLEOTIDE SEQUENCE [LARGE SCALE GENOMIC DNA]</scope>
    <source>
        <strain>cv. Columbia</strain>
    </source>
</reference>
<reference key="2">
    <citation type="journal article" date="2017" name="Plant J.">
        <title>Araport11: a complete reannotation of the Arabidopsis thaliana reference genome.</title>
        <authorList>
            <person name="Cheng C.Y."/>
            <person name="Krishnakumar V."/>
            <person name="Chan A.P."/>
            <person name="Thibaud-Nissen F."/>
            <person name="Schobel S."/>
            <person name="Town C.D."/>
        </authorList>
    </citation>
    <scope>GENOME REANNOTATION</scope>
    <source>
        <strain>cv. Columbia</strain>
    </source>
</reference>
<reference key="3">
    <citation type="submission" date="2006-07" db="EMBL/GenBank/DDBJ databases">
        <title>Large-scale analysis of RIKEN Arabidopsis full-length (RAFL) cDNAs.</title>
        <authorList>
            <person name="Totoki Y."/>
            <person name="Seki M."/>
            <person name="Ishida J."/>
            <person name="Nakajima M."/>
            <person name="Enju A."/>
            <person name="Kamiya A."/>
            <person name="Narusaka M."/>
            <person name="Shin-i T."/>
            <person name="Nakagawa M."/>
            <person name="Sakamoto N."/>
            <person name="Oishi K."/>
            <person name="Kohara Y."/>
            <person name="Kobayashi M."/>
            <person name="Toyoda A."/>
            <person name="Sakaki Y."/>
            <person name="Sakurai T."/>
            <person name="Iida K."/>
            <person name="Akiyama K."/>
            <person name="Satou M."/>
            <person name="Toyoda T."/>
            <person name="Konagaya A."/>
            <person name="Carninci P."/>
            <person name="Kawai J."/>
            <person name="Hayashizaki Y."/>
            <person name="Shinozaki K."/>
        </authorList>
    </citation>
    <scope>NUCLEOTIDE SEQUENCE [LARGE SCALE MRNA]</scope>
    <source>
        <strain>cv. Columbia</strain>
    </source>
</reference>
<reference key="4">
    <citation type="submission" date="2009-03" db="EMBL/GenBank/DDBJ databases">
        <title>ORF cloning and analysis of Arabidopsis transcription factor genes.</title>
        <authorList>
            <person name="Fujita M."/>
            <person name="Mizukado S."/>
            <person name="Seki M."/>
            <person name="Shinozaki K."/>
            <person name="Mitsuda N."/>
            <person name="Takiguchi Y."/>
            <person name="Takagi M."/>
        </authorList>
    </citation>
    <scope>NUCLEOTIDE SEQUENCE [LARGE SCALE MRNA]</scope>
</reference>
<reference key="5">
    <citation type="journal article" date="2001" name="Nucleic Acids Res.">
        <title>The Arabidopsis thaliana genome contains at least 29 active genes encoding SET domain proteins that can be assigned to four evolutionarily conserved classes.</title>
        <authorList>
            <person name="Baumbusch L.O."/>
            <person name="Thorstensen T."/>
            <person name="Krauss V."/>
            <person name="Fischer A."/>
            <person name="Naumann K."/>
            <person name="Assalkhou R."/>
            <person name="Schulz I."/>
            <person name="Reuter G."/>
            <person name="Aalen R.B."/>
        </authorList>
    </citation>
    <scope>NOMENCLATURE</scope>
</reference>
<dbReference type="EC" id="2.1.1.-"/>
<dbReference type="EMBL" id="AL132959">
    <property type="protein sequence ID" value="CAB71104.1"/>
    <property type="status" value="ALT_SEQ"/>
    <property type="molecule type" value="Genomic_DNA"/>
</dbReference>
<dbReference type="EMBL" id="CP002686">
    <property type="protein sequence ID" value="AEE80250.1"/>
    <property type="molecule type" value="Genomic_DNA"/>
</dbReference>
<dbReference type="EMBL" id="AK227351">
    <property type="protein sequence ID" value="BAE99361.1"/>
    <property type="molecule type" value="mRNA"/>
</dbReference>
<dbReference type="EMBL" id="AB493660">
    <property type="protein sequence ID" value="BAH30498.1"/>
    <property type="molecule type" value="mRNA"/>
</dbReference>
<dbReference type="PIR" id="T47966">
    <property type="entry name" value="T47966"/>
</dbReference>
<dbReference type="RefSeq" id="NP_191733.3">
    <molecule id="Q9M364-1"/>
    <property type="nucleotide sequence ID" value="NM_116039.4"/>
</dbReference>
<dbReference type="SMR" id="Q9M364"/>
<dbReference type="BioGRID" id="10661">
    <property type="interactions" value="3"/>
</dbReference>
<dbReference type="FunCoup" id="Q9M364">
    <property type="interactions" value="41"/>
</dbReference>
<dbReference type="STRING" id="3702.Q9M364"/>
<dbReference type="iPTMnet" id="Q9M364"/>
<dbReference type="PaxDb" id="3702-AT3G61740.1"/>
<dbReference type="EnsemblPlants" id="AT3G61740.1">
    <molecule id="Q9M364-1"/>
    <property type="protein sequence ID" value="AT3G61740.1"/>
    <property type="gene ID" value="AT3G61740"/>
</dbReference>
<dbReference type="GeneID" id="825347"/>
<dbReference type="Gramene" id="AT3G61740.1">
    <molecule id="Q9M364-1"/>
    <property type="protein sequence ID" value="AT3G61740.1"/>
    <property type="gene ID" value="AT3G61740"/>
</dbReference>
<dbReference type="KEGG" id="ath:AT3G61740"/>
<dbReference type="Araport" id="AT3G61740"/>
<dbReference type="TAIR" id="AT3G61740">
    <property type="gene designation" value="SDG14"/>
</dbReference>
<dbReference type="eggNOG" id="KOG1080">
    <property type="taxonomic scope" value="Eukaryota"/>
</dbReference>
<dbReference type="InParanoid" id="Q9M364"/>
<dbReference type="PhylomeDB" id="Q9M364"/>
<dbReference type="PRO" id="PR:Q9M364"/>
<dbReference type="Proteomes" id="UP000006548">
    <property type="component" value="Chromosome 3"/>
</dbReference>
<dbReference type="ExpressionAtlas" id="Q9M364">
    <property type="expression patterns" value="baseline and differential"/>
</dbReference>
<dbReference type="GO" id="GO:0048188">
    <property type="term" value="C:Set1C/COMPASS complex"/>
    <property type="evidence" value="ECO:0000314"/>
    <property type="project" value="TAIR"/>
</dbReference>
<dbReference type="GO" id="GO:0042054">
    <property type="term" value="F:histone methyltransferase activity"/>
    <property type="evidence" value="ECO:0007669"/>
    <property type="project" value="RHEA"/>
</dbReference>
<dbReference type="GO" id="GO:0008270">
    <property type="term" value="F:zinc ion binding"/>
    <property type="evidence" value="ECO:0007669"/>
    <property type="project" value="UniProtKB-KW"/>
</dbReference>
<dbReference type="GO" id="GO:0032259">
    <property type="term" value="P:methylation"/>
    <property type="evidence" value="ECO:0007669"/>
    <property type="project" value="UniProtKB-KW"/>
</dbReference>
<dbReference type="CDD" id="cd15663">
    <property type="entry name" value="ePHD_ATX3_4_5_like"/>
    <property type="match status" value="1"/>
</dbReference>
<dbReference type="CDD" id="cd15495">
    <property type="entry name" value="PHD_ATX3_4_5_like"/>
    <property type="match status" value="1"/>
</dbReference>
<dbReference type="CDD" id="cd15517">
    <property type="entry name" value="PHD_TCF19_like"/>
    <property type="match status" value="1"/>
</dbReference>
<dbReference type="CDD" id="cd20143">
    <property type="entry name" value="PWWP_AtATX3-like"/>
    <property type="match status" value="1"/>
</dbReference>
<dbReference type="CDD" id="cd10518">
    <property type="entry name" value="SET_SETD1-like"/>
    <property type="match status" value="1"/>
</dbReference>
<dbReference type="FunFam" id="2.170.270.10:FF:000058">
    <property type="entry name" value="Histone-lysine N-methyltransferase"/>
    <property type="match status" value="1"/>
</dbReference>
<dbReference type="FunFam" id="3.30.40.10:FF:000464">
    <property type="entry name" value="Histone-lysine N-methyltransferase"/>
    <property type="match status" value="1"/>
</dbReference>
<dbReference type="Gene3D" id="2.30.30.140">
    <property type="match status" value="1"/>
</dbReference>
<dbReference type="Gene3D" id="3.10.390.10">
    <property type="entry name" value="SAND domain-like"/>
    <property type="match status" value="1"/>
</dbReference>
<dbReference type="Gene3D" id="2.170.270.10">
    <property type="entry name" value="SET domain"/>
    <property type="match status" value="1"/>
</dbReference>
<dbReference type="Gene3D" id="3.30.40.10">
    <property type="entry name" value="Zinc/RING finger domain, C3HC4 (zinc finger)"/>
    <property type="match status" value="3"/>
</dbReference>
<dbReference type="InterPro" id="IPR041955">
    <property type="entry name" value="ATX3/4/5_ePHD"/>
</dbReference>
<dbReference type="InterPro" id="IPR042011">
    <property type="entry name" value="ATX3/4/5_PHD"/>
</dbReference>
<dbReference type="InterPro" id="IPR034732">
    <property type="entry name" value="EPHD"/>
</dbReference>
<dbReference type="InterPro" id="IPR025780">
    <property type="entry name" value="Hist-Lys_N-MeTrfase_ATX"/>
</dbReference>
<dbReference type="InterPro" id="IPR050701">
    <property type="entry name" value="Histone_Mod_Regulator"/>
</dbReference>
<dbReference type="InterPro" id="IPR003616">
    <property type="entry name" value="Post-SET_dom"/>
</dbReference>
<dbReference type="InterPro" id="IPR000313">
    <property type="entry name" value="PWWP_dom"/>
</dbReference>
<dbReference type="InterPro" id="IPR010919">
    <property type="entry name" value="SAND-like_dom_sf"/>
</dbReference>
<dbReference type="InterPro" id="IPR001214">
    <property type="entry name" value="SET_dom"/>
</dbReference>
<dbReference type="InterPro" id="IPR046341">
    <property type="entry name" value="SET_dom_sf"/>
</dbReference>
<dbReference type="InterPro" id="IPR019786">
    <property type="entry name" value="Zinc_finger_PHD-type_CS"/>
</dbReference>
<dbReference type="InterPro" id="IPR011011">
    <property type="entry name" value="Znf_FYVE_PHD"/>
</dbReference>
<dbReference type="InterPro" id="IPR001965">
    <property type="entry name" value="Znf_PHD"/>
</dbReference>
<dbReference type="InterPro" id="IPR019787">
    <property type="entry name" value="Znf_PHD-finger"/>
</dbReference>
<dbReference type="InterPro" id="IPR013083">
    <property type="entry name" value="Znf_RING/FYVE/PHD"/>
</dbReference>
<dbReference type="PANTHER" id="PTHR13793:SF92">
    <property type="entry name" value="HISTONE-LYSINE N-METHYLTRANSFERASE ATX3"/>
    <property type="match status" value="1"/>
</dbReference>
<dbReference type="PANTHER" id="PTHR13793">
    <property type="entry name" value="PHD FINGER PROTEINS"/>
    <property type="match status" value="1"/>
</dbReference>
<dbReference type="Pfam" id="PF00628">
    <property type="entry name" value="PHD"/>
    <property type="match status" value="1"/>
</dbReference>
<dbReference type="Pfam" id="PF13831">
    <property type="entry name" value="PHD_2"/>
    <property type="match status" value="1"/>
</dbReference>
<dbReference type="Pfam" id="PF00855">
    <property type="entry name" value="PWWP"/>
    <property type="match status" value="1"/>
</dbReference>
<dbReference type="Pfam" id="PF00856">
    <property type="entry name" value="SET"/>
    <property type="match status" value="1"/>
</dbReference>
<dbReference type="Pfam" id="PF13832">
    <property type="entry name" value="zf-HC5HC2H_2"/>
    <property type="match status" value="1"/>
</dbReference>
<dbReference type="SMART" id="SM00249">
    <property type="entry name" value="PHD"/>
    <property type="match status" value="3"/>
</dbReference>
<dbReference type="SMART" id="SM00508">
    <property type="entry name" value="PostSET"/>
    <property type="match status" value="1"/>
</dbReference>
<dbReference type="SMART" id="SM00293">
    <property type="entry name" value="PWWP"/>
    <property type="match status" value="1"/>
</dbReference>
<dbReference type="SMART" id="SM00317">
    <property type="entry name" value="SET"/>
    <property type="match status" value="1"/>
</dbReference>
<dbReference type="SUPFAM" id="SSF57903">
    <property type="entry name" value="FYVE/PHD zinc finger"/>
    <property type="match status" value="2"/>
</dbReference>
<dbReference type="SUPFAM" id="SSF82199">
    <property type="entry name" value="SET domain"/>
    <property type="match status" value="1"/>
</dbReference>
<dbReference type="SUPFAM" id="SSF63748">
    <property type="entry name" value="Tudor/PWWP/MBT"/>
    <property type="match status" value="1"/>
</dbReference>
<dbReference type="PROSITE" id="PS51805">
    <property type="entry name" value="EPHD"/>
    <property type="match status" value="1"/>
</dbReference>
<dbReference type="PROSITE" id="PS50868">
    <property type="entry name" value="POST_SET"/>
    <property type="match status" value="1"/>
</dbReference>
<dbReference type="PROSITE" id="PS50812">
    <property type="entry name" value="PWWP"/>
    <property type="match status" value="1"/>
</dbReference>
<dbReference type="PROSITE" id="PS51566">
    <property type="entry name" value="SAM_MT43_TRX_MLL"/>
    <property type="match status" value="1"/>
</dbReference>
<dbReference type="PROSITE" id="PS50280">
    <property type="entry name" value="SET"/>
    <property type="match status" value="1"/>
</dbReference>
<dbReference type="PROSITE" id="PS01359">
    <property type="entry name" value="ZF_PHD_1"/>
    <property type="match status" value="2"/>
</dbReference>
<dbReference type="PROSITE" id="PS50016">
    <property type="entry name" value="ZF_PHD_2"/>
    <property type="match status" value="2"/>
</dbReference>
<accession>Q9M364</accession>
<accession>C0SVF7</accession>
<accession>Q0WU37</accession>
<feature type="chain" id="PRO_0000233356" description="Histone-lysine N-methyltransferase ATX3">
    <location>
        <begin position="1"/>
        <end position="1018"/>
    </location>
</feature>
<feature type="domain" description="PWWP" evidence="3">
    <location>
        <begin position="189"/>
        <end position="258"/>
    </location>
</feature>
<feature type="domain" description="SET" evidence="4">
    <location>
        <begin position="875"/>
        <end position="993"/>
    </location>
</feature>
<feature type="domain" description="Post-SET" evidence="2">
    <location>
        <begin position="1002"/>
        <end position="1018"/>
    </location>
</feature>
<feature type="zinc finger region" description="C2HC pre-PHD-type" evidence="5">
    <location>
        <begin position="600"/>
        <end position="634"/>
    </location>
</feature>
<feature type="zinc finger region" description="PHD-type 3" evidence="5">
    <location>
        <begin position="658"/>
        <end position="715"/>
    </location>
</feature>
<feature type="region of interest" description="Disordered" evidence="6">
    <location>
        <begin position="39"/>
        <end position="150"/>
    </location>
</feature>
<feature type="compositionally biased region" description="Low complexity" evidence="6">
    <location>
        <begin position="54"/>
        <end position="63"/>
    </location>
</feature>
<feature type="compositionally biased region" description="Polar residues" evidence="6">
    <location>
        <begin position="69"/>
        <end position="78"/>
    </location>
</feature>
<feature type="compositionally biased region" description="Basic and acidic residues" evidence="6">
    <location>
        <begin position="135"/>
        <end position="147"/>
    </location>
</feature>
<feature type="binding site" evidence="4">
    <location>
        <position position="885"/>
    </location>
    <ligand>
        <name>S-adenosyl-L-methionine</name>
        <dbReference type="ChEBI" id="CHEBI:59789"/>
    </ligand>
</feature>
<feature type="binding site" evidence="4">
    <location>
        <position position="929"/>
    </location>
    <ligand>
        <name>S-adenosyl-L-methionine</name>
        <dbReference type="ChEBI" id="CHEBI:59789"/>
    </ligand>
</feature>
<feature type="binding site" evidence="1">
    <location>
        <begin position="952"/>
        <end position="953"/>
    </location>
    <ligand>
        <name>S-adenosyl-L-methionine</name>
        <dbReference type="ChEBI" id="CHEBI:59789"/>
    </ligand>
</feature>
<feature type="binding site" evidence="1">
    <location>
        <position position="955"/>
    </location>
    <ligand>
        <name>Zn(2+)</name>
        <dbReference type="ChEBI" id="CHEBI:29105"/>
    </ligand>
</feature>
<feature type="binding site" evidence="1">
    <location>
        <position position="1006"/>
    </location>
    <ligand>
        <name>Zn(2+)</name>
        <dbReference type="ChEBI" id="CHEBI:29105"/>
    </ligand>
</feature>
<feature type="binding site" evidence="1">
    <location>
        <position position="1008"/>
    </location>
    <ligand>
        <name>Zn(2+)</name>
        <dbReference type="ChEBI" id="CHEBI:29105"/>
    </ligand>
</feature>
<feature type="binding site" evidence="1">
    <location>
        <position position="1013"/>
    </location>
    <ligand>
        <name>Zn(2+)</name>
        <dbReference type="ChEBI" id="CHEBI:29105"/>
    </ligand>
</feature>
<feature type="sequence conflict" description="In Ref. 3; BAE99361." evidence="7" ref="3">
    <original>P</original>
    <variation>S</variation>
    <location>
        <position position="87"/>
    </location>
</feature>
<feature type="sequence conflict" description="In Ref. 3; BAE99361." evidence="7" ref="3">
    <original>E</original>
    <variation>G</variation>
    <location>
        <position position="1000"/>
    </location>
</feature>
<name>ATX3_ARATH</name>